<gene>
    <name evidence="1" type="primary">pheS</name>
    <name type="ordered locus">RSc1581</name>
    <name type="ORF">RS03943</name>
</gene>
<name>SYFA_RALN1</name>
<keyword id="KW-0030">Aminoacyl-tRNA synthetase</keyword>
<keyword id="KW-0067">ATP-binding</keyword>
<keyword id="KW-0963">Cytoplasm</keyword>
<keyword id="KW-0436">Ligase</keyword>
<keyword id="KW-0460">Magnesium</keyword>
<keyword id="KW-0479">Metal-binding</keyword>
<keyword id="KW-0547">Nucleotide-binding</keyword>
<keyword id="KW-0648">Protein biosynthesis</keyword>
<keyword id="KW-1185">Reference proteome</keyword>
<sequence length="344" mass="38751">MSLDLDQVVADAQTAFASVEDNASLENEKARFLGKSGVLTDLLKGLGKLDPQTRKSEGARINLAKSRVEAALNDRRQALADALMNARLAAEAIDVTLPGRDVAEGSLHPVMNTWERVAQIFGSIGFDVADGPEIETDWMNFTALNNPDNHPARSMQDTFYIDGRDSDDKLLLLRTHTSPMQVRYARMHVEKYKHLDRIPPIKVIAPGRTYRVDSDATHSPMFHQVEGLWIADNISFADLKGVYTDFLRKFFESDDIQVRFRPSYFPFTEPSAEIDMAFGNGRWLEISGSGQVHPTVVRNMGLDPERYIGFAFGSGLERLTMLRYGINDLRLFFEGDVRFLRQFA</sequence>
<evidence type="ECO:0000255" key="1">
    <source>
        <dbReference type="HAMAP-Rule" id="MF_00281"/>
    </source>
</evidence>
<accession>Q8XZ25</accession>
<comment type="catalytic activity">
    <reaction evidence="1">
        <text>tRNA(Phe) + L-phenylalanine + ATP = L-phenylalanyl-tRNA(Phe) + AMP + diphosphate + H(+)</text>
        <dbReference type="Rhea" id="RHEA:19413"/>
        <dbReference type="Rhea" id="RHEA-COMP:9668"/>
        <dbReference type="Rhea" id="RHEA-COMP:9699"/>
        <dbReference type="ChEBI" id="CHEBI:15378"/>
        <dbReference type="ChEBI" id="CHEBI:30616"/>
        <dbReference type="ChEBI" id="CHEBI:33019"/>
        <dbReference type="ChEBI" id="CHEBI:58095"/>
        <dbReference type="ChEBI" id="CHEBI:78442"/>
        <dbReference type="ChEBI" id="CHEBI:78531"/>
        <dbReference type="ChEBI" id="CHEBI:456215"/>
        <dbReference type="EC" id="6.1.1.20"/>
    </reaction>
</comment>
<comment type="cofactor">
    <cofactor evidence="1">
        <name>Mg(2+)</name>
        <dbReference type="ChEBI" id="CHEBI:18420"/>
    </cofactor>
    <text evidence="1">Binds 2 magnesium ions per tetramer.</text>
</comment>
<comment type="subunit">
    <text evidence="1">Tetramer of two alpha and two beta subunits.</text>
</comment>
<comment type="subcellular location">
    <subcellularLocation>
        <location evidence="1">Cytoplasm</location>
    </subcellularLocation>
</comment>
<comment type="similarity">
    <text evidence="1">Belongs to the class-II aminoacyl-tRNA synthetase family. Phe-tRNA synthetase alpha subunit type 1 subfamily.</text>
</comment>
<dbReference type="EC" id="6.1.1.20" evidence="1"/>
<dbReference type="EMBL" id="AL646052">
    <property type="protein sequence ID" value="CAD15283.1"/>
    <property type="molecule type" value="Genomic_DNA"/>
</dbReference>
<dbReference type="RefSeq" id="WP_011001523.1">
    <property type="nucleotide sequence ID" value="NC_003295.1"/>
</dbReference>
<dbReference type="SMR" id="Q8XZ25"/>
<dbReference type="STRING" id="267608.RSc1581"/>
<dbReference type="EnsemblBacteria" id="CAD15283">
    <property type="protein sequence ID" value="CAD15283"/>
    <property type="gene ID" value="RSc1581"/>
</dbReference>
<dbReference type="KEGG" id="rso:RSc1581"/>
<dbReference type="eggNOG" id="COG0016">
    <property type="taxonomic scope" value="Bacteria"/>
</dbReference>
<dbReference type="HOGENOM" id="CLU_025086_0_1_4"/>
<dbReference type="Proteomes" id="UP000001436">
    <property type="component" value="Chromosome"/>
</dbReference>
<dbReference type="GO" id="GO:0005737">
    <property type="term" value="C:cytoplasm"/>
    <property type="evidence" value="ECO:0007669"/>
    <property type="project" value="UniProtKB-SubCell"/>
</dbReference>
<dbReference type="GO" id="GO:0005524">
    <property type="term" value="F:ATP binding"/>
    <property type="evidence" value="ECO:0007669"/>
    <property type="project" value="UniProtKB-UniRule"/>
</dbReference>
<dbReference type="GO" id="GO:0000287">
    <property type="term" value="F:magnesium ion binding"/>
    <property type="evidence" value="ECO:0007669"/>
    <property type="project" value="UniProtKB-UniRule"/>
</dbReference>
<dbReference type="GO" id="GO:0004826">
    <property type="term" value="F:phenylalanine-tRNA ligase activity"/>
    <property type="evidence" value="ECO:0007669"/>
    <property type="project" value="UniProtKB-UniRule"/>
</dbReference>
<dbReference type="GO" id="GO:0000049">
    <property type="term" value="F:tRNA binding"/>
    <property type="evidence" value="ECO:0007669"/>
    <property type="project" value="InterPro"/>
</dbReference>
<dbReference type="GO" id="GO:0006432">
    <property type="term" value="P:phenylalanyl-tRNA aminoacylation"/>
    <property type="evidence" value="ECO:0007669"/>
    <property type="project" value="UniProtKB-UniRule"/>
</dbReference>
<dbReference type="CDD" id="cd00496">
    <property type="entry name" value="PheRS_alpha_core"/>
    <property type="match status" value="1"/>
</dbReference>
<dbReference type="Gene3D" id="3.30.930.10">
    <property type="entry name" value="Bira Bifunctional Protein, Domain 2"/>
    <property type="match status" value="1"/>
</dbReference>
<dbReference type="HAMAP" id="MF_00281">
    <property type="entry name" value="Phe_tRNA_synth_alpha1"/>
    <property type="match status" value="1"/>
</dbReference>
<dbReference type="InterPro" id="IPR006195">
    <property type="entry name" value="aa-tRNA-synth_II"/>
</dbReference>
<dbReference type="InterPro" id="IPR045864">
    <property type="entry name" value="aa-tRNA-synth_II/BPL/LPL"/>
</dbReference>
<dbReference type="InterPro" id="IPR004529">
    <property type="entry name" value="Phe-tRNA-synth_IIc_asu"/>
</dbReference>
<dbReference type="InterPro" id="IPR004188">
    <property type="entry name" value="Phe-tRNA_ligase_II_N"/>
</dbReference>
<dbReference type="InterPro" id="IPR022911">
    <property type="entry name" value="Phe_tRNA_ligase_alpha1_bac"/>
</dbReference>
<dbReference type="InterPro" id="IPR002319">
    <property type="entry name" value="Phenylalanyl-tRNA_Synthase"/>
</dbReference>
<dbReference type="InterPro" id="IPR010978">
    <property type="entry name" value="tRNA-bd_arm"/>
</dbReference>
<dbReference type="NCBIfam" id="TIGR00468">
    <property type="entry name" value="pheS"/>
    <property type="match status" value="1"/>
</dbReference>
<dbReference type="PANTHER" id="PTHR11538:SF41">
    <property type="entry name" value="PHENYLALANINE--TRNA LIGASE, MITOCHONDRIAL"/>
    <property type="match status" value="1"/>
</dbReference>
<dbReference type="PANTHER" id="PTHR11538">
    <property type="entry name" value="PHENYLALANYL-TRNA SYNTHETASE"/>
    <property type="match status" value="1"/>
</dbReference>
<dbReference type="Pfam" id="PF02912">
    <property type="entry name" value="Phe_tRNA-synt_N"/>
    <property type="match status" value="1"/>
</dbReference>
<dbReference type="Pfam" id="PF01409">
    <property type="entry name" value="tRNA-synt_2d"/>
    <property type="match status" value="1"/>
</dbReference>
<dbReference type="SUPFAM" id="SSF55681">
    <property type="entry name" value="Class II aaRS and biotin synthetases"/>
    <property type="match status" value="1"/>
</dbReference>
<dbReference type="SUPFAM" id="SSF46589">
    <property type="entry name" value="tRNA-binding arm"/>
    <property type="match status" value="1"/>
</dbReference>
<dbReference type="PROSITE" id="PS50862">
    <property type="entry name" value="AA_TRNA_LIGASE_II"/>
    <property type="match status" value="1"/>
</dbReference>
<proteinExistence type="inferred from homology"/>
<protein>
    <recommendedName>
        <fullName evidence="1">Phenylalanine--tRNA ligase alpha subunit</fullName>
        <ecNumber evidence="1">6.1.1.20</ecNumber>
    </recommendedName>
    <alternativeName>
        <fullName evidence="1">Phenylalanyl-tRNA synthetase alpha subunit</fullName>
        <shortName evidence="1">PheRS</shortName>
    </alternativeName>
</protein>
<feature type="chain" id="PRO_0000126747" description="Phenylalanine--tRNA ligase alpha subunit">
    <location>
        <begin position="1"/>
        <end position="344"/>
    </location>
</feature>
<feature type="binding site" evidence="1">
    <location>
        <position position="269"/>
    </location>
    <ligand>
        <name>Mg(2+)</name>
        <dbReference type="ChEBI" id="CHEBI:18420"/>
        <note>shared with beta subunit</note>
    </ligand>
</feature>
<reference key="1">
    <citation type="journal article" date="2002" name="Nature">
        <title>Genome sequence of the plant pathogen Ralstonia solanacearum.</title>
        <authorList>
            <person name="Salanoubat M."/>
            <person name="Genin S."/>
            <person name="Artiguenave F."/>
            <person name="Gouzy J."/>
            <person name="Mangenot S."/>
            <person name="Arlat M."/>
            <person name="Billault A."/>
            <person name="Brottier P."/>
            <person name="Camus J.-C."/>
            <person name="Cattolico L."/>
            <person name="Chandler M."/>
            <person name="Choisne N."/>
            <person name="Claudel-Renard C."/>
            <person name="Cunnac S."/>
            <person name="Demange N."/>
            <person name="Gaspin C."/>
            <person name="Lavie M."/>
            <person name="Moisan A."/>
            <person name="Robert C."/>
            <person name="Saurin W."/>
            <person name="Schiex T."/>
            <person name="Siguier P."/>
            <person name="Thebault P."/>
            <person name="Whalen M."/>
            <person name="Wincker P."/>
            <person name="Levy M."/>
            <person name="Weissenbach J."/>
            <person name="Boucher C.A."/>
        </authorList>
    </citation>
    <scope>NUCLEOTIDE SEQUENCE [LARGE SCALE GENOMIC DNA]</scope>
    <source>
        <strain>ATCC BAA-1114 / GMI1000</strain>
    </source>
</reference>
<organism>
    <name type="scientific">Ralstonia nicotianae (strain ATCC BAA-1114 / GMI1000)</name>
    <name type="common">Ralstonia solanacearum</name>
    <dbReference type="NCBI Taxonomy" id="267608"/>
    <lineage>
        <taxon>Bacteria</taxon>
        <taxon>Pseudomonadati</taxon>
        <taxon>Pseudomonadota</taxon>
        <taxon>Betaproteobacteria</taxon>
        <taxon>Burkholderiales</taxon>
        <taxon>Burkholderiaceae</taxon>
        <taxon>Ralstonia</taxon>
        <taxon>Ralstonia solanacearum species complex</taxon>
    </lineage>
</organism>